<reference key="1">
    <citation type="journal article" date="2005" name="Nucleic Acids Res.">
        <title>Genome dynamics and diversity of Shigella species, the etiologic agents of bacillary dysentery.</title>
        <authorList>
            <person name="Yang F."/>
            <person name="Yang J."/>
            <person name="Zhang X."/>
            <person name="Chen L."/>
            <person name="Jiang Y."/>
            <person name="Yan Y."/>
            <person name="Tang X."/>
            <person name="Wang J."/>
            <person name="Xiong Z."/>
            <person name="Dong J."/>
            <person name="Xue Y."/>
            <person name="Zhu Y."/>
            <person name="Xu X."/>
            <person name="Sun L."/>
            <person name="Chen S."/>
            <person name="Nie H."/>
            <person name="Peng J."/>
            <person name="Xu J."/>
            <person name="Wang Y."/>
            <person name="Yuan Z."/>
            <person name="Wen Y."/>
            <person name="Yao Z."/>
            <person name="Shen Y."/>
            <person name="Qiang B."/>
            <person name="Hou Y."/>
            <person name="Yu J."/>
            <person name="Jin Q."/>
        </authorList>
    </citation>
    <scope>NUCLEOTIDE SEQUENCE [LARGE SCALE GENOMIC DNA]</scope>
    <source>
        <strain>Ss046</strain>
    </source>
</reference>
<comment type="function">
    <text evidence="1">Formation of pseudouridine at positions 38, 39 and 40 in the anticodon stem and loop of transfer RNAs.</text>
</comment>
<comment type="catalytic activity">
    <reaction evidence="1">
        <text>uridine(38/39/40) in tRNA = pseudouridine(38/39/40) in tRNA</text>
        <dbReference type="Rhea" id="RHEA:22376"/>
        <dbReference type="Rhea" id="RHEA-COMP:10085"/>
        <dbReference type="Rhea" id="RHEA-COMP:10087"/>
        <dbReference type="ChEBI" id="CHEBI:65314"/>
        <dbReference type="ChEBI" id="CHEBI:65315"/>
        <dbReference type="EC" id="5.4.99.12"/>
    </reaction>
</comment>
<comment type="subunit">
    <text evidence="1">Homodimer.</text>
</comment>
<comment type="similarity">
    <text evidence="1">Belongs to the tRNA pseudouridine synthase TruA family.</text>
</comment>
<name>TRUA_SHISS</name>
<keyword id="KW-0413">Isomerase</keyword>
<keyword id="KW-1185">Reference proteome</keyword>
<keyword id="KW-0819">tRNA processing</keyword>
<feature type="chain" id="PRO_1000017178" description="tRNA pseudouridine synthase A">
    <location>
        <begin position="1"/>
        <end position="270"/>
    </location>
</feature>
<feature type="region of interest" description="RNA binding" evidence="1">
    <location>
        <begin position="107"/>
        <end position="111"/>
    </location>
</feature>
<feature type="region of interest" description="Interaction with tRNA" evidence="1">
    <location>
        <begin position="168"/>
        <end position="172"/>
    </location>
</feature>
<feature type="active site" description="Nucleophile" evidence="1">
    <location>
        <position position="60"/>
    </location>
</feature>
<feature type="binding site" evidence="1">
    <location>
        <position position="118"/>
    </location>
    <ligand>
        <name>substrate</name>
    </ligand>
</feature>
<feature type="site" description="Interaction with tRNA; Important for base-flipping" evidence="1">
    <location>
        <position position="58"/>
    </location>
</feature>
<feature type="site" description="Interaction with tRNA" evidence="1">
    <location>
        <position position="78"/>
    </location>
</feature>
<feature type="site" description="Interaction with tRNA" evidence="1">
    <location>
        <position position="110"/>
    </location>
</feature>
<feature type="site" description="Interaction with tRNA" evidence="1">
    <location>
        <position position="126"/>
    </location>
</feature>
<feature type="site" description="Interaction with tRNA" evidence="1">
    <location>
        <position position="139"/>
    </location>
</feature>
<sequence>MSDQQQLPVYKIALGIEYDGSKYYGWQRQNEVRSVQEKLEKALSQVANEPITVFCAGRTDAGVHGTGQVVHFETTAQRKDAAWTLGVNANLPGDIAVRWVKAVPDDFHARFSATARRYRYIIYNHRLRPAVLSKGVTHFYEPLDAERMHRAAQCLLGENDFTSFRAVQCQSRTPWRNVMHINVTRHGPYVVVDIKANAFVHHMVRNIVGSLMEVGAHNQPERWIAELLAAKDRTLAAATAKAEGLYLVAVDYPDRYDLPKPPMGPLFLAD</sequence>
<evidence type="ECO:0000255" key="1">
    <source>
        <dbReference type="HAMAP-Rule" id="MF_00171"/>
    </source>
</evidence>
<dbReference type="EC" id="5.4.99.12" evidence="1"/>
<dbReference type="EMBL" id="CP000038">
    <property type="protein sequence ID" value="AAZ89019.1"/>
    <property type="molecule type" value="Genomic_DNA"/>
</dbReference>
<dbReference type="RefSeq" id="WP_001283580.1">
    <property type="nucleotide sequence ID" value="NC_007384.1"/>
</dbReference>
<dbReference type="SMR" id="Q3YZP3"/>
<dbReference type="GeneID" id="93774856"/>
<dbReference type="KEGG" id="ssn:SSON_2376"/>
<dbReference type="HOGENOM" id="CLU_014673_0_2_6"/>
<dbReference type="Proteomes" id="UP000002529">
    <property type="component" value="Chromosome"/>
</dbReference>
<dbReference type="GO" id="GO:0003723">
    <property type="term" value="F:RNA binding"/>
    <property type="evidence" value="ECO:0007669"/>
    <property type="project" value="InterPro"/>
</dbReference>
<dbReference type="GO" id="GO:0160147">
    <property type="term" value="F:tRNA pseudouridine(38-40) synthase activity"/>
    <property type="evidence" value="ECO:0007669"/>
    <property type="project" value="UniProtKB-EC"/>
</dbReference>
<dbReference type="GO" id="GO:0031119">
    <property type="term" value="P:tRNA pseudouridine synthesis"/>
    <property type="evidence" value="ECO:0007669"/>
    <property type="project" value="UniProtKB-UniRule"/>
</dbReference>
<dbReference type="CDD" id="cd02570">
    <property type="entry name" value="PseudoU_synth_EcTruA"/>
    <property type="match status" value="1"/>
</dbReference>
<dbReference type="FunFam" id="3.30.70.580:FF:000001">
    <property type="entry name" value="tRNA pseudouridine synthase A"/>
    <property type="match status" value="1"/>
</dbReference>
<dbReference type="FunFam" id="3.30.70.660:FF:000001">
    <property type="entry name" value="tRNA pseudouridine synthase A"/>
    <property type="match status" value="1"/>
</dbReference>
<dbReference type="Gene3D" id="3.30.70.660">
    <property type="entry name" value="Pseudouridine synthase I, catalytic domain, C-terminal subdomain"/>
    <property type="match status" value="1"/>
</dbReference>
<dbReference type="Gene3D" id="3.30.70.580">
    <property type="entry name" value="Pseudouridine synthase I, catalytic domain, N-terminal subdomain"/>
    <property type="match status" value="1"/>
</dbReference>
<dbReference type="HAMAP" id="MF_00171">
    <property type="entry name" value="TruA"/>
    <property type="match status" value="1"/>
</dbReference>
<dbReference type="InterPro" id="IPR020103">
    <property type="entry name" value="PsdUridine_synth_cat_dom_sf"/>
</dbReference>
<dbReference type="InterPro" id="IPR001406">
    <property type="entry name" value="PsdUridine_synth_TruA"/>
</dbReference>
<dbReference type="InterPro" id="IPR020097">
    <property type="entry name" value="PsdUridine_synth_TruA_a/b_dom"/>
</dbReference>
<dbReference type="InterPro" id="IPR020095">
    <property type="entry name" value="PsdUridine_synth_TruA_C"/>
</dbReference>
<dbReference type="InterPro" id="IPR020094">
    <property type="entry name" value="TruA/RsuA/RluB/E/F_N"/>
</dbReference>
<dbReference type="NCBIfam" id="TIGR00071">
    <property type="entry name" value="hisT_truA"/>
    <property type="match status" value="1"/>
</dbReference>
<dbReference type="PANTHER" id="PTHR11142">
    <property type="entry name" value="PSEUDOURIDYLATE SYNTHASE"/>
    <property type="match status" value="1"/>
</dbReference>
<dbReference type="PANTHER" id="PTHR11142:SF0">
    <property type="entry name" value="TRNA PSEUDOURIDINE SYNTHASE-LIKE 1"/>
    <property type="match status" value="1"/>
</dbReference>
<dbReference type="Pfam" id="PF01416">
    <property type="entry name" value="PseudoU_synth_1"/>
    <property type="match status" value="2"/>
</dbReference>
<dbReference type="PIRSF" id="PIRSF001430">
    <property type="entry name" value="tRNA_psdUrid_synth"/>
    <property type="match status" value="1"/>
</dbReference>
<dbReference type="SUPFAM" id="SSF55120">
    <property type="entry name" value="Pseudouridine synthase"/>
    <property type="match status" value="1"/>
</dbReference>
<organism>
    <name type="scientific">Shigella sonnei (strain Ss046)</name>
    <dbReference type="NCBI Taxonomy" id="300269"/>
    <lineage>
        <taxon>Bacteria</taxon>
        <taxon>Pseudomonadati</taxon>
        <taxon>Pseudomonadota</taxon>
        <taxon>Gammaproteobacteria</taxon>
        <taxon>Enterobacterales</taxon>
        <taxon>Enterobacteriaceae</taxon>
        <taxon>Shigella</taxon>
    </lineage>
</organism>
<proteinExistence type="inferred from homology"/>
<protein>
    <recommendedName>
        <fullName evidence="1">tRNA pseudouridine synthase A</fullName>
        <ecNumber evidence="1">5.4.99.12</ecNumber>
    </recommendedName>
    <alternativeName>
        <fullName evidence="1">tRNA pseudouridine(38-40) synthase</fullName>
    </alternativeName>
    <alternativeName>
        <fullName evidence="1">tRNA pseudouridylate synthase I</fullName>
    </alternativeName>
    <alternativeName>
        <fullName evidence="1">tRNA-uridine isomerase I</fullName>
    </alternativeName>
</protein>
<accession>Q3YZP3</accession>
<gene>
    <name evidence="1" type="primary">truA</name>
    <name type="ordered locus">SSON_2376</name>
</gene>